<reference key="1">
    <citation type="journal article" date="2003" name="Genome Res.">
        <title>Genome sequence of an M3 strain of Streptococcus pyogenes reveals a large-scale genomic rearrangement in invasive strains and new insights into phage evolution.</title>
        <authorList>
            <person name="Nakagawa I."/>
            <person name="Kurokawa K."/>
            <person name="Yamashita A."/>
            <person name="Nakata M."/>
            <person name="Tomiyasu Y."/>
            <person name="Okahashi N."/>
            <person name="Kawabata S."/>
            <person name="Yamazaki K."/>
            <person name="Shiba T."/>
            <person name="Yasunaga T."/>
            <person name="Hayashi H."/>
            <person name="Hattori M."/>
            <person name="Hamada S."/>
        </authorList>
    </citation>
    <scope>NUCLEOTIDE SEQUENCE [LARGE SCALE GENOMIC DNA]</scope>
    <source>
        <strain>SSI-1</strain>
    </source>
</reference>
<proteinExistence type="inferred from homology"/>
<gene>
    <name evidence="1" type="primary">rsmH</name>
    <name type="synonym">mraW</name>
    <name type="ordered locus">SPs0459</name>
</gene>
<name>RSMH_STRPQ</name>
<comment type="function">
    <text evidence="1">Specifically methylates the N4 position of cytidine in position 1402 (C1402) of 16S rRNA.</text>
</comment>
<comment type="catalytic activity">
    <reaction evidence="1">
        <text>cytidine(1402) in 16S rRNA + S-adenosyl-L-methionine = N(4)-methylcytidine(1402) in 16S rRNA + S-adenosyl-L-homocysteine + H(+)</text>
        <dbReference type="Rhea" id="RHEA:42928"/>
        <dbReference type="Rhea" id="RHEA-COMP:10286"/>
        <dbReference type="Rhea" id="RHEA-COMP:10287"/>
        <dbReference type="ChEBI" id="CHEBI:15378"/>
        <dbReference type="ChEBI" id="CHEBI:57856"/>
        <dbReference type="ChEBI" id="CHEBI:59789"/>
        <dbReference type="ChEBI" id="CHEBI:74506"/>
        <dbReference type="ChEBI" id="CHEBI:82748"/>
        <dbReference type="EC" id="2.1.1.199"/>
    </reaction>
</comment>
<comment type="subcellular location">
    <subcellularLocation>
        <location evidence="1">Cytoplasm</location>
    </subcellularLocation>
</comment>
<comment type="similarity">
    <text evidence="1">Belongs to the methyltransferase superfamily. RsmH family.</text>
</comment>
<comment type="sequence caution" evidence="2">
    <conflict type="erroneous initiation">
        <sequence resource="EMBL-CDS" id="BAC63554"/>
    </conflict>
</comment>
<feature type="chain" id="PRO_0000411406" description="Ribosomal RNA small subunit methyltransferase H">
    <location>
        <begin position="1"/>
        <end position="316"/>
    </location>
</feature>
<feature type="binding site" evidence="1">
    <location>
        <begin position="35"/>
        <end position="37"/>
    </location>
    <ligand>
        <name>S-adenosyl-L-methionine</name>
        <dbReference type="ChEBI" id="CHEBI:59789"/>
    </ligand>
</feature>
<feature type="binding site" evidence="1">
    <location>
        <position position="55"/>
    </location>
    <ligand>
        <name>S-adenosyl-L-methionine</name>
        <dbReference type="ChEBI" id="CHEBI:59789"/>
    </ligand>
</feature>
<feature type="binding site" evidence="1">
    <location>
        <position position="84"/>
    </location>
    <ligand>
        <name>S-adenosyl-L-methionine</name>
        <dbReference type="ChEBI" id="CHEBI:59789"/>
    </ligand>
</feature>
<feature type="binding site" evidence="1">
    <location>
        <position position="105"/>
    </location>
    <ligand>
        <name>S-adenosyl-L-methionine</name>
        <dbReference type="ChEBI" id="CHEBI:59789"/>
    </ligand>
</feature>
<feature type="binding site" evidence="1">
    <location>
        <position position="112"/>
    </location>
    <ligand>
        <name>S-adenosyl-L-methionine</name>
        <dbReference type="ChEBI" id="CHEBI:59789"/>
    </ligand>
</feature>
<dbReference type="EC" id="2.1.1.199" evidence="1"/>
<dbReference type="EMBL" id="BA000034">
    <property type="protein sequence ID" value="BAC63554.1"/>
    <property type="status" value="ALT_INIT"/>
    <property type="molecule type" value="Genomic_DNA"/>
</dbReference>
<dbReference type="RefSeq" id="WP_002988893.1">
    <property type="nucleotide sequence ID" value="NC_004606.1"/>
</dbReference>
<dbReference type="SMR" id="P0DC37"/>
<dbReference type="KEGG" id="sps:SPs0459"/>
<dbReference type="HOGENOM" id="CLU_038422_2_0_9"/>
<dbReference type="GO" id="GO:0005737">
    <property type="term" value="C:cytoplasm"/>
    <property type="evidence" value="ECO:0007669"/>
    <property type="project" value="UniProtKB-SubCell"/>
</dbReference>
<dbReference type="GO" id="GO:0071424">
    <property type="term" value="F:rRNA (cytosine-N4-)-methyltransferase activity"/>
    <property type="evidence" value="ECO:0007669"/>
    <property type="project" value="UniProtKB-UniRule"/>
</dbReference>
<dbReference type="GO" id="GO:0070475">
    <property type="term" value="P:rRNA base methylation"/>
    <property type="evidence" value="ECO:0007669"/>
    <property type="project" value="UniProtKB-UniRule"/>
</dbReference>
<dbReference type="FunFam" id="1.10.150.170:FF:000001">
    <property type="entry name" value="Ribosomal RNA small subunit methyltransferase H"/>
    <property type="match status" value="1"/>
</dbReference>
<dbReference type="Gene3D" id="1.10.150.170">
    <property type="entry name" value="Putative methyltransferase TM0872, insert domain"/>
    <property type="match status" value="1"/>
</dbReference>
<dbReference type="Gene3D" id="3.40.50.150">
    <property type="entry name" value="Vaccinia Virus protein VP39"/>
    <property type="match status" value="1"/>
</dbReference>
<dbReference type="HAMAP" id="MF_01007">
    <property type="entry name" value="16SrRNA_methyltr_H"/>
    <property type="match status" value="1"/>
</dbReference>
<dbReference type="InterPro" id="IPR002903">
    <property type="entry name" value="RsmH"/>
</dbReference>
<dbReference type="InterPro" id="IPR023397">
    <property type="entry name" value="SAM-dep_MeTrfase_MraW_recog"/>
</dbReference>
<dbReference type="InterPro" id="IPR029063">
    <property type="entry name" value="SAM-dependent_MTases_sf"/>
</dbReference>
<dbReference type="NCBIfam" id="TIGR00006">
    <property type="entry name" value="16S rRNA (cytosine(1402)-N(4))-methyltransferase RsmH"/>
    <property type="match status" value="1"/>
</dbReference>
<dbReference type="PANTHER" id="PTHR11265:SF0">
    <property type="entry name" value="12S RRNA N4-METHYLCYTIDINE METHYLTRANSFERASE"/>
    <property type="match status" value="1"/>
</dbReference>
<dbReference type="PANTHER" id="PTHR11265">
    <property type="entry name" value="S-ADENOSYL-METHYLTRANSFERASE MRAW"/>
    <property type="match status" value="1"/>
</dbReference>
<dbReference type="Pfam" id="PF01795">
    <property type="entry name" value="Methyltransf_5"/>
    <property type="match status" value="1"/>
</dbReference>
<dbReference type="PIRSF" id="PIRSF004486">
    <property type="entry name" value="MraW"/>
    <property type="match status" value="1"/>
</dbReference>
<dbReference type="SUPFAM" id="SSF81799">
    <property type="entry name" value="Putative methyltransferase TM0872, insert domain"/>
    <property type="match status" value="1"/>
</dbReference>
<dbReference type="SUPFAM" id="SSF53335">
    <property type="entry name" value="S-adenosyl-L-methionine-dependent methyltransferases"/>
    <property type="match status" value="1"/>
</dbReference>
<accession>P0DC37</accession>
<accession>P65432</accession>
<accession>Q99YJ9</accession>
<evidence type="ECO:0000255" key="1">
    <source>
        <dbReference type="HAMAP-Rule" id="MF_01007"/>
    </source>
</evidence>
<evidence type="ECO:0000305" key="2"/>
<sequence>MTKEFHHVTVLLHETVDMLDIKPDGIYVDATLGGSGHSAYLLSKLGEEGHLYCFDQDQKAIDNAQVTLKSYIDKGQVTFIKDNFRHLKARLTALGVDEIDGILYDLGVSSPQLDERERGFSYKQDAPLDMRMDRQSLLTAYEVVNTYPFNDLVKIFFKYGEDKFSKQIARKIEQARAIKPIETTTELAELIKAAKPAKELKKKGHPAKQIFQAIRIEVNDELGAADESIQDAMELLALDGRISVITFHSLEDRLTKQLFKEASTVDVPKGLPLIPEDMKPKFELVSRKPILPSHSELTANKRAHSAKLRVAKKIRK</sequence>
<organism>
    <name type="scientific">Streptococcus pyogenes serotype M3 (strain SSI-1)</name>
    <dbReference type="NCBI Taxonomy" id="193567"/>
    <lineage>
        <taxon>Bacteria</taxon>
        <taxon>Bacillati</taxon>
        <taxon>Bacillota</taxon>
        <taxon>Bacilli</taxon>
        <taxon>Lactobacillales</taxon>
        <taxon>Streptococcaceae</taxon>
        <taxon>Streptococcus</taxon>
    </lineage>
</organism>
<protein>
    <recommendedName>
        <fullName evidence="1">Ribosomal RNA small subunit methyltransferase H</fullName>
        <ecNumber evidence="1">2.1.1.199</ecNumber>
    </recommendedName>
    <alternativeName>
        <fullName evidence="1">16S rRNA m(4)C1402 methyltransferase</fullName>
    </alternativeName>
    <alternativeName>
        <fullName evidence="1">rRNA (cytosine-N(4)-)-methyltransferase RsmH</fullName>
    </alternativeName>
</protein>
<keyword id="KW-0963">Cytoplasm</keyword>
<keyword id="KW-0489">Methyltransferase</keyword>
<keyword id="KW-0698">rRNA processing</keyword>
<keyword id="KW-0949">S-adenosyl-L-methionine</keyword>
<keyword id="KW-0808">Transferase</keyword>